<name>RBSD_THENN</name>
<sequence>MKKVGILNSEISKIVADMGHMDTLAVVDLGFPIPQGVKKVDLVVDRGKPGLMEVIEILLRELKVERIILAKEMDEKSIQTKQELLKLIEKMNGPVEVVTVPHKEFKEMSKNVKGIIRTGADIPYSNVILVGGVIF</sequence>
<proteinExistence type="inferred from homology"/>
<reference key="1">
    <citation type="submission" date="2007-11" db="EMBL/GenBank/DDBJ databases">
        <title>The genome sequence of the hyperthermophilic bacterium Thermotoga neapolitana.</title>
        <authorList>
            <person name="Lim S.K."/>
            <person name="Kim J.S."/>
            <person name="Cha S.H."/>
            <person name="Park B.C."/>
            <person name="Lee D.S."/>
            <person name="Tae H.S."/>
            <person name="Kim S.-J."/>
            <person name="Kim J.J."/>
            <person name="Park K.J."/>
            <person name="Lee S.Y."/>
        </authorList>
    </citation>
    <scope>NUCLEOTIDE SEQUENCE [LARGE SCALE GENOMIC DNA]</scope>
    <source>
        <strain>ATCC 49049 / DSM 4359 / NBRC 107923 / NS-E</strain>
    </source>
</reference>
<comment type="function">
    <text evidence="1">Catalyzes the interconversion of beta-pyran and beta-furan forms of D-ribose.</text>
</comment>
<comment type="catalytic activity">
    <reaction evidence="1">
        <text>beta-D-ribopyranose = beta-D-ribofuranose</text>
        <dbReference type="Rhea" id="RHEA:25432"/>
        <dbReference type="ChEBI" id="CHEBI:27476"/>
        <dbReference type="ChEBI" id="CHEBI:47002"/>
        <dbReference type="EC" id="5.4.99.62"/>
    </reaction>
</comment>
<comment type="pathway">
    <text evidence="1">Carbohydrate metabolism; D-ribose degradation; D-ribose 5-phosphate from beta-D-ribopyranose: step 1/2.</text>
</comment>
<comment type="subunit">
    <text evidence="1">Homodecamer.</text>
</comment>
<comment type="subcellular location">
    <subcellularLocation>
        <location evidence="1">Cytoplasm</location>
    </subcellularLocation>
</comment>
<comment type="similarity">
    <text evidence="1">Belongs to the RbsD / FucU family. RbsD subfamily.</text>
</comment>
<accession>B9KA10</accession>
<evidence type="ECO:0000255" key="1">
    <source>
        <dbReference type="HAMAP-Rule" id="MF_01661"/>
    </source>
</evidence>
<gene>
    <name evidence="1" type="primary">rbsD</name>
    <name type="ordered locus">CTN_1617</name>
</gene>
<dbReference type="EC" id="5.4.99.62" evidence="1"/>
<dbReference type="EMBL" id="CP000916">
    <property type="protein sequence ID" value="ACM23793.1"/>
    <property type="molecule type" value="Genomic_DNA"/>
</dbReference>
<dbReference type="RefSeq" id="WP_004080603.1">
    <property type="nucleotide sequence ID" value="NC_011978.1"/>
</dbReference>
<dbReference type="SMR" id="B9KA10"/>
<dbReference type="STRING" id="309803.CTN_1617"/>
<dbReference type="KEGG" id="tna:CTN_1617"/>
<dbReference type="eggNOG" id="COG1869">
    <property type="taxonomic scope" value="Bacteria"/>
</dbReference>
<dbReference type="HOGENOM" id="CLU_135498_0_0_0"/>
<dbReference type="UniPathway" id="UPA00916">
    <property type="reaction ID" value="UER00888"/>
</dbReference>
<dbReference type="Proteomes" id="UP000000445">
    <property type="component" value="Chromosome"/>
</dbReference>
<dbReference type="GO" id="GO:0005829">
    <property type="term" value="C:cytosol"/>
    <property type="evidence" value="ECO:0007669"/>
    <property type="project" value="TreeGrafter"/>
</dbReference>
<dbReference type="GO" id="GO:0062193">
    <property type="term" value="F:D-ribose pyranase activity"/>
    <property type="evidence" value="ECO:0007669"/>
    <property type="project" value="UniProtKB-EC"/>
</dbReference>
<dbReference type="GO" id="GO:0016872">
    <property type="term" value="F:intramolecular lyase activity"/>
    <property type="evidence" value="ECO:0007669"/>
    <property type="project" value="UniProtKB-UniRule"/>
</dbReference>
<dbReference type="GO" id="GO:0048029">
    <property type="term" value="F:monosaccharide binding"/>
    <property type="evidence" value="ECO:0007669"/>
    <property type="project" value="InterPro"/>
</dbReference>
<dbReference type="GO" id="GO:0019303">
    <property type="term" value="P:D-ribose catabolic process"/>
    <property type="evidence" value="ECO:0007669"/>
    <property type="project" value="UniProtKB-UniRule"/>
</dbReference>
<dbReference type="FunFam" id="3.40.1650.10:FF:000004">
    <property type="entry name" value="D-ribose pyranase"/>
    <property type="match status" value="1"/>
</dbReference>
<dbReference type="Gene3D" id="3.40.1650.10">
    <property type="entry name" value="RbsD-like domain"/>
    <property type="match status" value="1"/>
</dbReference>
<dbReference type="HAMAP" id="MF_01661">
    <property type="entry name" value="D_rib_pyranase"/>
    <property type="match status" value="1"/>
</dbReference>
<dbReference type="InterPro" id="IPR023064">
    <property type="entry name" value="D-ribose_pyranase"/>
</dbReference>
<dbReference type="InterPro" id="IPR023750">
    <property type="entry name" value="RbsD-like_sf"/>
</dbReference>
<dbReference type="InterPro" id="IPR007721">
    <property type="entry name" value="RbsD_FucU"/>
</dbReference>
<dbReference type="NCBIfam" id="NF008761">
    <property type="entry name" value="PRK11797.1"/>
    <property type="match status" value="1"/>
</dbReference>
<dbReference type="PANTHER" id="PTHR37831">
    <property type="entry name" value="D-RIBOSE PYRANASE"/>
    <property type="match status" value="1"/>
</dbReference>
<dbReference type="PANTHER" id="PTHR37831:SF1">
    <property type="entry name" value="D-RIBOSE PYRANASE"/>
    <property type="match status" value="1"/>
</dbReference>
<dbReference type="Pfam" id="PF05025">
    <property type="entry name" value="RbsD_FucU"/>
    <property type="match status" value="1"/>
</dbReference>
<dbReference type="SUPFAM" id="SSF102546">
    <property type="entry name" value="RbsD-like"/>
    <property type="match status" value="1"/>
</dbReference>
<protein>
    <recommendedName>
        <fullName evidence="1">D-ribose pyranase</fullName>
        <ecNumber evidence="1">5.4.99.62</ecNumber>
    </recommendedName>
</protein>
<organism>
    <name type="scientific">Thermotoga neapolitana (strain ATCC 49049 / DSM 4359 / NBRC 107923 / NS-E)</name>
    <dbReference type="NCBI Taxonomy" id="309803"/>
    <lineage>
        <taxon>Bacteria</taxon>
        <taxon>Thermotogati</taxon>
        <taxon>Thermotogota</taxon>
        <taxon>Thermotogae</taxon>
        <taxon>Thermotogales</taxon>
        <taxon>Thermotogaceae</taxon>
        <taxon>Thermotoga</taxon>
    </lineage>
</organism>
<feature type="chain" id="PRO_1000187171" description="D-ribose pyranase">
    <location>
        <begin position="1"/>
        <end position="135"/>
    </location>
</feature>
<feature type="active site" description="Proton donor" evidence="1">
    <location>
        <position position="20"/>
    </location>
</feature>
<feature type="binding site" evidence="1">
    <location>
        <position position="28"/>
    </location>
    <ligand>
        <name>substrate</name>
    </ligand>
</feature>
<feature type="binding site" evidence="1">
    <location>
        <position position="102"/>
    </location>
    <ligand>
        <name>substrate</name>
    </ligand>
</feature>
<feature type="binding site" evidence="1">
    <location>
        <begin position="124"/>
        <end position="126"/>
    </location>
    <ligand>
        <name>substrate</name>
    </ligand>
</feature>
<keyword id="KW-0119">Carbohydrate metabolism</keyword>
<keyword id="KW-0963">Cytoplasm</keyword>
<keyword id="KW-0413">Isomerase</keyword>